<dbReference type="EMBL" id="AF041468">
    <property type="protein sequence ID" value="AAC35708.1"/>
    <property type="molecule type" value="Genomic_DNA"/>
</dbReference>
<dbReference type="RefSeq" id="NP_050774.1">
    <property type="nucleotide sequence ID" value="NC_000926.1"/>
</dbReference>
<dbReference type="SMR" id="O46899"/>
<dbReference type="GeneID" id="857082"/>
<dbReference type="HOGENOM" id="CLU_083987_3_3_1"/>
<dbReference type="OMA" id="KRIQPRA"/>
<dbReference type="GO" id="GO:0009507">
    <property type="term" value="C:chloroplast"/>
    <property type="evidence" value="ECO:0007669"/>
    <property type="project" value="UniProtKB-SubCell"/>
</dbReference>
<dbReference type="GO" id="GO:0015934">
    <property type="term" value="C:large ribosomal subunit"/>
    <property type="evidence" value="ECO:0007669"/>
    <property type="project" value="InterPro"/>
</dbReference>
<dbReference type="GO" id="GO:0019843">
    <property type="term" value="F:rRNA binding"/>
    <property type="evidence" value="ECO:0007669"/>
    <property type="project" value="UniProtKB-UniRule"/>
</dbReference>
<dbReference type="GO" id="GO:0003735">
    <property type="term" value="F:structural constituent of ribosome"/>
    <property type="evidence" value="ECO:0007669"/>
    <property type="project" value="InterPro"/>
</dbReference>
<dbReference type="GO" id="GO:0006412">
    <property type="term" value="P:translation"/>
    <property type="evidence" value="ECO:0007669"/>
    <property type="project" value="UniProtKB-UniRule"/>
</dbReference>
<dbReference type="CDD" id="cd00336">
    <property type="entry name" value="Ribosomal_L22"/>
    <property type="match status" value="1"/>
</dbReference>
<dbReference type="Gene3D" id="3.90.470.10">
    <property type="entry name" value="Ribosomal protein L22/L17"/>
    <property type="match status" value="1"/>
</dbReference>
<dbReference type="HAMAP" id="MF_01331_B">
    <property type="entry name" value="Ribosomal_uL22_B"/>
    <property type="match status" value="1"/>
</dbReference>
<dbReference type="InterPro" id="IPR001063">
    <property type="entry name" value="Ribosomal_uL22"/>
</dbReference>
<dbReference type="InterPro" id="IPR005727">
    <property type="entry name" value="Ribosomal_uL22_bac/chlpt-type"/>
</dbReference>
<dbReference type="InterPro" id="IPR047867">
    <property type="entry name" value="Ribosomal_uL22_bac/org-type"/>
</dbReference>
<dbReference type="InterPro" id="IPR018260">
    <property type="entry name" value="Ribosomal_uL22_CS"/>
</dbReference>
<dbReference type="InterPro" id="IPR036394">
    <property type="entry name" value="Ribosomal_uL22_sf"/>
</dbReference>
<dbReference type="NCBIfam" id="TIGR01044">
    <property type="entry name" value="rplV_bact"/>
    <property type="match status" value="1"/>
</dbReference>
<dbReference type="PANTHER" id="PTHR13501">
    <property type="entry name" value="CHLOROPLAST 50S RIBOSOMAL PROTEIN L22-RELATED"/>
    <property type="match status" value="1"/>
</dbReference>
<dbReference type="PANTHER" id="PTHR13501:SF10">
    <property type="entry name" value="LARGE RIBOSOMAL SUBUNIT PROTEIN UL22M"/>
    <property type="match status" value="1"/>
</dbReference>
<dbReference type="Pfam" id="PF00237">
    <property type="entry name" value="Ribosomal_L22"/>
    <property type="match status" value="1"/>
</dbReference>
<dbReference type="SUPFAM" id="SSF54843">
    <property type="entry name" value="Ribosomal protein L22"/>
    <property type="match status" value="1"/>
</dbReference>
<dbReference type="PROSITE" id="PS00464">
    <property type="entry name" value="RIBOSOMAL_L22"/>
    <property type="match status" value="1"/>
</dbReference>
<geneLocation type="chloroplast"/>
<protein>
    <recommendedName>
        <fullName evidence="2">Large ribosomal subunit protein uL22c</fullName>
    </recommendedName>
    <alternativeName>
        <fullName>50S ribosomal protein L22, chloroplastic</fullName>
    </alternativeName>
</protein>
<feature type="chain" id="PRO_0000125306" description="Large ribosomal subunit protein uL22c">
    <location>
        <begin position="1"/>
        <end position="121"/>
    </location>
</feature>
<gene>
    <name type="primary">rpl22</name>
</gene>
<evidence type="ECO:0000250" key="1"/>
<evidence type="ECO:0000305" key="2"/>
<comment type="function">
    <text evidence="1">This protein binds specifically to 23S rRNA.</text>
</comment>
<comment type="function">
    <text evidence="1">The globular domain of the protein is located near the polypeptide exit tunnel on the outside of the subunit, while an extended beta-hairpin is found that lines the wall of the exit tunnel in the center of the 70S ribosome.</text>
</comment>
<comment type="subunit">
    <text evidence="1">Part of the 50S ribosomal subunit.</text>
</comment>
<comment type="subcellular location">
    <subcellularLocation>
        <location>Plastid</location>
        <location>Chloroplast</location>
    </subcellularLocation>
</comment>
<comment type="similarity">
    <text evidence="2">Belongs to the universal ribosomal protein uL22 family.</text>
</comment>
<name>RK22_GUITH</name>
<proteinExistence type="inferred from homology"/>
<accession>O46899</accession>
<sequence>MILSLNSPNVAVPTAKYIRMSPSKIQRVLNQIRGKSYKESLMILEFMPYAACKPVLQAVQSAGANAQHNKGINKNDLVVSLASVDNGPVLRRFRPRAQGRGFKIQKFTSHIRIGVQKQVNF</sequence>
<organism>
    <name type="scientific">Guillardia theta</name>
    <name type="common">Cryptophyte</name>
    <name type="synonym">Cryptomonas phi</name>
    <dbReference type="NCBI Taxonomy" id="55529"/>
    <lineage>
        <taxon>Eukaryota</taxon>
        <taxon>Cryptophyceae</taxon>
        <taxon>Pyrenomonadales</taxon>
        <taxon>Geminigeraceae</taxon>
        <taxon>Guillardia</taxon>
    </lineage>
</organism>
<keyword id="KW-0150">Chloroplast</keyword>
<keyword id="KW-0934">Plastid</keyword>
<keyword id="KW-0687">Ribonucleoprotein</keyword>
<keyword id="KW-0689">Ribosomal protein</keyword>
<keyword id="KW-0694">RNA-binding</keyword>
<keyword id="KW-0699">rRNA-binding</keyword>
<reference key="1">
    <citation type="journal article" date="1997" name="Biochem. Mol. Biol. Int.">
        <title>The large ribosomal protein gene cluster of a cryptomonad plastid: gene organization, sequence and evolutionary implications.</title>
        <authorList>
            <person name="Wang S.L."/>
            <person name="Liu X.-Q."/>
            <person name="Douglas S.E."/>
        </authorList>
    </citation>
    <scope>NUCLEOTIDE SEQUENCE [GENOMIC DNA]</scope>
</reference>
<reference key="2">
    <citation type="journal article" date="1999" name="J. Mol. Evol.">
        <title>The plastid genome of the cryptophyte alga, Guillardia theta: complete sequence and conserved synteny groups confirm its common ancestry with red algae.</title>
        <authorList>
            <person name="Douglas S.E."/>
            <person name="Penny S.L."/>
        </authorList>
    </citation>
    <scope>NUCLEOTIDE SEQUENCE [LARGE SCALE GENOMIC DNA]</scope>
</reference>